<reference key="1">
    <citation type="journal article" date="2007" name="Photosyn. Res.">
        <title>Complete nucleotide sequence of the freshwater unicellular cyanobacterium Synechococcus elongatus PCC 6301 chromosome: gene content and organization.</title>
        <authorList>
            <person name="Sugita C."/>
            <person name="Ogata K."/>
            <person name="Shikata M."/>
            <person name="Jikuya H."/>
            <person name="Takano J."/>
            <person name="Furumichi M."/>
            <person name="Kanehisa M."/>
            <person name="Omata T."/>
            <person name="Sugiura M."/>
            <person name="Sugita M."/>
        </authorList>
    </citation>
    <scope>NUCLEOTIDE SEQUENCE [LARGE SCALE GENOMIC DNA]</scope>
    <source>
        <strain>ATCC 27144 / PCC 6301 / SAUG 1402/1</strain>
    </source>
</reference>
<reference key="2">
    <citation type="journal article" date="1987" name="FEBS Lett.">
        <title>Amino acid sequences of alpha-allophycocyanin B from Synechococcus 6301 and Mastigocladus laminosus.</title>
        <authorList>
            <person name="Suter F."/>
            <person name="Fueglistaller P."/>
            <person name="Lundell D.J."/>
            <person name="Glazer A.N."/>
            <person name="Zuber H."/>
        </authorList>
    </citation>
    <scope>PROTEIN SEQUENCE OF 2-163</scope>
</reference>
<proteinExistence type="evidence at protein level"/>
<accession>P11390</accession>
<accession>Q5N2K7</accession>
<protein>
    <recommendedName>
        <fullName>Allophycocyanin alpha-B chain</fullName>
    </recommendedName>
</protein>
<comment type="function">
    <text>Light-harvesting photosynthetic bile pigment-protein from the phycobiliprotein complex. Allophycocyanin has a maximum absorption at approximately 650 nanometers.</text>
</comment>
<comment type="subunit">
    <text>Heterodimer of an alpha and a beta chain.</text>
</comment>
<comment type="subcellular location">
    <subcellularLocation>
        <location>Cellular thylakoid membrane</location>
        <topology>Peripheral membrane protein</topology>
        <orientation>Cytoplasmic side</orientation>
    </subcellularLocation>
    <text>Forms the core of the phycobilisome.</text>
</comment>
<comment type="PTM">
    <text>Contains one covalently linked bilin chromophore.</text>
</comment>
<comment type="similarity">
    <text evidence="3">Belongs to the phycobiliprotein family.</text>
</comment>
<evidence type="ECO:0000250" key="1"/>
<evidence type="ECO:0000269" key="2">
    <source ref="2"/>
</evidence>
<evidence type="ECO:0000305" key="3"/>
<feature type="initiator methionine" description="Removed" evidence="2">
    <location>
        <position position="1"/>
    </location>
</feature>
<feature type="chain" id="PRO_0000199077" description="Allophycocyanin alpha-B chain">
    <location>
        <begin position="2"/>
        <end position="163"/>
    </location>
</feature>
<feature type="binding site" description="covalent">
    <location>
        <position position="81"/>
    </location>
    <ligand>
        <name>(2R,3E)-phycocyanobilin</name>
        <dbReference type="ChEBI" id="CHEBI:85275"/>
    </ligand>
</feature>
<feature type="modified residue" description="N4-methylasparagine" evidence="1">
    <location>
        <position position="71"/>
    </location>
</feature>
<feature type="sequence conflict" description="In Ref. 2; AA sequence." evidence="3" ref="2">
    <original>RAQ</original>
    <variation>EAQRG</variation>
    <location>
        <begin position="78"/>
        <end position="80"/>
    </location>
</feature>
<feature type="sequence conflict" description="In Ref. 2; AA sequence." evidence="3" ref="2">
    <original>YG</original>
    <variation>GD</variation>
    <location>
        <begin position="85"/>
        <end position="86"/>
    </location>
</feature>
<feature type="sequence conflict" description="In Ref. 2; AA sequence." evidence="3" ref="2">
    <location>
        <begin position="162"/>
        <end position="163"/>
    </location>
</feature>
<gene>
    <name type="ordered locus">syc1273_d</name>
</gene>
<organism>
    <name type="scientific">Synechococcus sp. (strain ATCC 27144 / PCC 6301 / SAUG 1402/1)</name>
    <name type="common">Anacystis nidulans</name>
    <dbReference type="NCBI Taxonomy" id="269084"/>
    <lineage>
        <taxon>Bacteria</taxon>
        <taxon>Bacillati</taxon>
        <taxon>Cyanobacteriota</taxon>
        <taxon>Cyanophyceae</taxon>
        <taxon>Synechococcales</taxon>
        <taxon>Synechococcaceae</taxon>
        <taxon>Synechococcus</taxon>
    </lineage>
</organism>
<dbReference type="EMBL" id="AP008231">
    <property type="protein sequence ID" value="BAD79463.1"/>
    <property type="molecule type" value="Genomic_DNA"/>
</dbReference>
<dbReference type="PIR" id="A27398">
    <property type="entry name" value="A27398"/>
</dbReference>
<dbReference type="RefSeq" id="WP_011243585.1">
    <property type="nucleotide sequence ID" value="NZ_CP085785.1"/>
</dbReference>
<dbReference type="SMR" id="P11390"/>
<dbReference type="KEGG" id="syc:syc1273_d"/>
<dbReference type="eggNOG" id="ENOG502Z81S">
    <property type="taxonomic scope" value="Bacteria"/>
</dbReference>
<dbReference type="Proteomes" id="UP000001175">
    <property type="component" value="Chromosome"/>
</dbReference>
<dbReference type="GO" id="GO:0030089">
    <property type="term" value="C:phycobilisome"/>
    <property type="evidence" value="ECO:0007669"/>
    <property type="project" value="UniProtKB-KW"/>
</dbReference>
<dbReference type="GO" id="GO:0031676">
    <property type="term" value="C:plasma membrane-derived thylakoid membrane"/>
    <property type="evidence" value="ECO:0007669"/>
    <property type="project" value="UniProtKB-SubCell"/>
</dbReference>
<dbReference type="GO" id="GO:0015979">
    <property type="term" value="P:photosynthesis"/>
    <property type="evidence" value="ECO:0007669"/>
    <property type="project" value="UniProtKB-KW"/>
</dbReference>
<dbReference type="CDD" id="cd12125">
    <property type="entry name" value="APC_alpha"/>
    <property type="match status" value="1"/>
</dbReference>
<dbReference type="Gene3D" id="1.10.490.20">
    <property type="entry name" value="Phycocyanins"/>
    <property type="match status" value="1"/>
</dbReference>
<dbReference type="InterPro" id="IPR009050">
    <property type="entry name" value="Globin-like_sf"/>
</dbReference>
<dbReference type="InterPro" id="IPR012128">
    <property type="entry name" value="Phycobilisome_asu/bsu"/>
</dbReference>
<dbReference type="InterPro" id="IPR038719">
    <property type="entry name" value="Phycobilisome_asu/bsu_sf"/>
</dbReference>
<dbReference type="PANTHER" id="PTHR34011:SF2">
    <property type="entry name" value="ALLOPHYCOCYANIN ALPHA CHAIN"/>
    <property type="match status" value="1"/>
</dbReference>
<dbReference type="PANTHER" id="PTHR34011">
    <property type="entry name" value="PHYCOBILISOME 32.1 KDA LINKER POLYPEPTIDE, PHYCOCYANIN-ASSOCIATED, ROD 2-RELATED"/>
    <property type="match status" value="1"/>
</dbReference>
<dbReference type="Pfam" id="PF00502">
    <property type="entry name" value="Phycobilisome"/>
    <property type="match status" value="1"/>
</dbReference>
<dbReference type="PIRSF" id="PIRSF000081">
    <property type="entry name" value="Phycocyanin"/>
    <property type="match status" value="1"/>
</dbReference>
<dbReference type="SUPFAM" id="SSF46458">
    <property type="entry name" value="Globin-like"/>
    <property type="match status" value="1"/>
</dbReference>
<keyword id="KW-0042">Antenna complex</keyword>
<keyword id="KW-0089">Bile pigment</keyword>
<keyword id="KW-0157">Chromophore</keyword>
<keyword id="KW-0903">Direct protein sequencing</keyword>
<keyword id="KW-0249">Electron transport</keyword>
<keyword id="KW-0472">Membrane</keyword>
<keyword id="KW-0488">Methylation</keyword>
<keyword id="KW-0602">Photosynthesis</keyword>
<keyword id="KW-0605">Phycobilisome</keyword>
<keyword id="KW-0793">Thylakoid</keyword>
<keyword id="KW-0813">Transport</keyword>
<sequence length="163" mass="18130">MTIVSQVILKADDELRYPSGGELKNITDFFKTGEQRLRIAQVLSDSEKKIVDQASRKLWQRRPDFIAPGGNAYGQRQRAQCLRDYGWYLRLITYGVLAGDKEPIESIGLLGAREMYNSLGVPLPGMAEAIRTLKEASLALLSSADATVAAPYFDFLIQGMETI</sequence>
<name>APCD_SYNP6</name>